<dbReference type="EC" id="1.14.14.1" evidence="5 6"/>
<dbReference type="EC" id="1.6.2.4" evidence="5 6"/>
<dbReference type="EMBL" id="D87979">
    <property type="protein sequence ID" value="BAA20123.1"/>
    <property type="molecule type" value="Genomic_DNA"/>
</dbReference>
<dbReference type="EMBL" id="AL009126">
    <property type="protein sequence ID" value="CAB12544.1"/>
    <property type="molecule type" value="Genomic_DNA"/>
</dbReference>
<dbReference type="PIR" id="D69799">
    <property type="entry name" value="D69799"/>
</dbReference>
<dbReference type="RefSeq" id="NP_388606.1">
    <property type="nucleotide sequence ID" value="NC_000964.3"/>
</dbReference>
<dbReference type="RefSeq" id="WP_003242884.1">
    <property type="nucleotide sequence ID" value="NZ_OZ025638.1"/>
</dbReference>
<dbReference type="SMR" id="O08394"/>
<dbReference type="FunCoup" id="O08394">
    <property type="interactions" value="473"/>
</dbReference>
<dbReference type="STRING" id="224308.BSU07250"/>
<dbReference type="PaxDb" id="224308-BSU07250"/>
<dbReference type="EnsemblBacteria" id="CAB12544">
    <property type="protein sequence ID" value="CAB12544"/>
    <property type="gene ID" value="BSU_07250"/>
</dbReference>
<dbReference type="GeneID" id="938784"/>
<dbReference type="KEGG" id="bsu:BSU07250"/>
<dbReference type="PATRIC" id="fig|224308.179.peg.786"/>
<dbReference type="eggNOG" id="COG0369">
    <property type="taxonomic scope" value="Bacteria"/>
</dbReference>
<dbReference type="eggNOG" id="COG2124">
    <property type="taxonomic scope" value="Bacteria"/>
</dbReference>
<dbReference type="InParanoid" id="O08394"/>
<dbReference type="OrthoDB" id="9789468at2"/>
<dbReference type="PhylomeDB" id="O08394"/>
<dbReference type="BioCyc" id="BSUB:BSU07250-MONOMER"/>
<dbReference type="SABIO-RK" id="O08394"/>
<dbReference type="Proteomes" id="UP000001570">
    <property type="component" value="Chromosome"/>
</dbReference>
<dbReference type="GO" id="GO:0005829">
    <property type="term" value="C:cytosol"/>
    <property type="evidence" value="ECO:0000318"/>
    <property type="project" value="GO_Central"/>
</dbReference>
<dbReference type="GO" id="GO:0070330">
    <property type="term" value="F:aromatase activity"/>
    <property type="evidence" value="ECO:0007669"/>
    <property type="project" value="InterPro"/>
</dbReference>
<dbReference type="GO" id="GO:0005504">
    <property type="term" value="F:fatty acid binding"/>
    <property type="evidence" value="ECO:0000314"/>
    <property type="project" value="UniProtKB"/>
</dbReference>
<dbReference type="GO" id="GO:0050660">
    <property type="term" value="F:flavin adenine dinucleotide binding"/>
    <property type="evidence" value="ECO:0000314"/>
    <property type="project" value="UniProtKB"/>
</dbReference>
<dbReference type="GO" id="GO:0010181">
    <property type="term" value="F:FMN binding"/>
    <property type="evidence" value="ECO:0000314"/>
    <property type="project" value="UniProtKB"/>
</dbReference>
<dbReference type="GO" id="GO:0020037">
    <property type="term" value="F:heme binding"/>
    <property type="evidence" value="ECO:0000314"/>
    <property type="project" value="UniProtKB"/>
</dbReference>
<dbReference type="GO" id="GO:0005506">
    <property type="term" value="F:iron ion binding"/>
    <property type="evidence" value="ECO:0000250"/>
    <property type="project" value="UniProtKB"/>
</dbReference>
<dbReference type="GO" id="GO:0003958">
    <property type="term" value="F:NADPH-hemoprotein reductase activity"/>
    <property type="evidence" value="ECO:0000314"/>
    <property type="project" value="UniProtKB"/>
</dbReference>
<dbReference type="GO" id="GO:0016491">
    <property type="term" value="F:oxidoreductase activity"/>
    <property type="evidence" value="ECO:0000318"/>
    <property type="project" value="GO_Central"/>
</dbReference>
<dbReference type="GO" id="GO:0016712">
    <property type="term" value="F:oxidoreductase activity, acting on paired donors, with incorporation or reduction of molecular oxygen, reduced flavin or flavoprotein as one donor, and incorporation of one atom of oxygen"/>
    <property type="evidence" value="ECO:0000314"/>
    <property type="project" value="UniProtKB"/>
</dbReference>
<dbReference type="GO" id="GO:0019395">
    <property type="term" value="P:fatty acid oxidation"/>
    <property type="evidence" value="ECO:0000314"/>
    <property type="project" value="UniProtKB"/>
</dbReference>
<dbReference type="CDD" id="cd06206">
    <property type="entry name" value="bifunctional_CYPOR"/>
    <property type="match status" value="1"/>
</dbReference>
<dbReference type="CDD" id="cd11068">
    <property type="entry name" value="CYP120A1"/>
    <property type="match status" value="1"/>
</dbReference>
<dbReference type="FunFam" id="1.10.630.10:FF:000040">
    <property type="entry name" value="Bifunctional cytochrome P450/NADPH--P450 reductase"/>
    <property type="match status" value="1"/>
</dbReference>
<dbReference type="FunFam" id="1.20.990.10:FF:000011">
    <property type="entry name" value="Bifunctional cytochrome P450/NADPH--P450 reductase"/>
    <property type="match status" value="1"/>
</dbReference>
<dbReference type="FunFam" id="3.40.50.360:FF:000048">
    <property type="entry name" value="Bifunctional cytochrome P450/NADPH--P450 reductase"/>
    <property type="match status" value="1"/>
</dbReference>
<dbReference type="FunFam" id="3.40.50.80:FF:000031">
    <property type="entry name" value="Bifunctional cytochrome P450/NADPH--P450 reductase"/>
    <property type="match status" value="1"/>
</dbReference>
<dbReference type="Gene3D" id="3.40.50.360">
    <property type="match status" value="1"/>
</dbReference>
<dbReference type="Gene3D" id="1.10.630.10">
    <property type="entry name" value="Cytochrome P450"/>
    <property type="match status" value="1"/>
</dbReference>
<dbReference type="Gene3D" id="1.20.990.10">
    <property type="entry name" value="NADPH-cytochrome p450 Reductase, Chain A, domain 3"/>
    <property type="match status" value="1"/>
</dbReference>
<dbReference type="Gene3D" id="3.40.50.80">
    <property type="entry name" value="Nucleotide-binding domain of ferredoxin-NADP reductase (FNR) module"/>
    <property type="match status" value="1"/>
</dbReference>
<dbReference type="Gene3D" id="2.40.30.10">
    <property type="entry name" value="Translation factors"/>
    <property type="match status" value="1"/>
</dbReference>
<dbReference type="InterPro" id="IPR023206">
    <property type="entry name" value="Bifunctional_P450_P450_red"/>
</dbReference>
<dbReference type="InterPro" id="IPR003097">
    <property type="entry name" value="CysJ-like_FAD-binding"/>
</dbReference>
<dbReference type="InterPro" id="IPR001128">
    <property type="entry name" value="Cyt_P450"/>
</dbReference>
<dbReference type="InterPro" id="IPR017972">
    <property type="entry name" value="Cyt_P450_CS"/>
</dbReference>
<dbReference type="InterPro" id="IPR036396">
    <property type="entry name" value="Cyt_P450_sf"/>
</dbReference>
<dbReference type="InterPro" id="IPR017927">
    <property type="entry name" value="FAD-bd_FR_type"/>
</dbReference>
<dbReference type="InterPro" id="IPR001094">
    <property type="entry name" value="Flavdoxin-like"/>
</dbReference>
<dbReference type="InterPro" id="IPR008254">
    <property type="entry name" value="Flavodoxin/NO_synth"/>
</dbReference>
<dbReference type="InterPro" id="IPR001709">
    <property type="entry name" value="Flavoprot_Pyr_Nucl_cyt_Rdtase"/>
</dbReference>
<dbReference type="InterPro" id="IPR029039">
    <property type="entry name" value="Flavoprotein-like_sf"/>
</dbReference>
<dbReference type="InterPro" id="IPR039261">
    <property type="entry name" value="FNR_nucleotide-bd"/>
</dbReference>
<dbReference type="InterPro" id="IPR023173">
    <property type="entry name" value="NADPH_Cyt_P450_Rdtase_alpha"/>
</dbReference>
<dbReference type="InterPro" id="IPR001433">
    <property type="entry name" value="OxRdtase_FAD/NAD-bd"/>
</dbReference>
<dbReference type="InterPro" id="IPR017938">
    <property type="entry name" value="Riboflavin_synthase-like_b-brl"/>
</dbReference>
<dbReference type="PANTHER" id="PTHR19384:SF17">
    <property type="entry name" value="NADPH--CYTOCHROME P450 REDUCTASE"/>
    <property type="match status" value="1"/>
</dbReference>
<dbReference type="PANTHER" id="PTHR19384">
    <property type="entry name" value="NITRIC OXIDE SYNTHASE-RELATED"/>
    <property type="match status" value="1"/>
</dbReference>
<dbReference type="Pfam" id="PF00667">
    <property type="entry name" value="FAD_binding_1"/>
    <property type="match status" value="1"/>
</dbReference>
<dbReference type="Pfam" id="PF00258">
    <property type="entry name" value="Flavodoxin_1"/>
    <property type="match status" value="1"/>
</dbReference>
<dbReference type="Pfam" id="PF00175">
    <property type="entry name" value="NAD_binding_1"/>
    <property type="match status" value="1"/>
</dbReference>
<dbReference type="Pfam" id="PF00067">
    <property type="entry name" value="p450"/>
    <property type="match status" value="1"/>
</dbReference>
<dbReference type="PIRSF" id="PIRSF000209">
    <property type="entry name" value="Bifunctional_P450_P450R"/>
    <property type="match status" value="1"/>
</dbReference>
<dbReference type="PRINTS" id="PR00369">
    <property type="entry name" value="FLAVODOXIN"/>
</dbReference>
<dbReference type="PRINTS" id="PR00371">
    <property type="entry name" value="FPNCR"/>
</dbReference>
<dbReference type="SUPFAM" id="SSF48264">
    <property type="entry name" value="Cytochrome P450"/>
    <property type="match status" value="1"/>
</dbReference>
<dbReference type="SUPFAM" id="SSF52343">
    <property type="entry name" value="Ferredoxin reductase-like, C-terminal NADP-linked domain"/>
    <property type="match status" value="1"/>
</dbReference>
<dbReference type="SUPFAM" id="SSF52218">
    <property type="entry name" value="Flavoproteins"/>
    <property type="match status" value="1"/>
</dbReference>
<dbReference type="SUPFAM" id="SSF63380">
    <property type="entry name" value="Riboflavin synthase domain-like"/>
    <property type="match status" value="1"/>
</dbReference>
<dbReference type="PROSITE" id="PS00086">
    <property type="entry name" value="CYTOCHROME_P450"/>
    <property type="match status" value="1"/>
</dbReference>
<dbReference type="PROSITE" id="PS51384">
    <property type="entry name" value="FAD_FR"/>
    <property type="match status" value="1"/>
</dbReference>
<dbReference type="PROSITE" id="PS50902">
    <property type="entry name" value="FLAVODOXIN_LIKE"/>
    <property type="match status" value="1"/>
</dbReference>
<accession>O08394</accession>
<name>CYPD_BACSU</name>
<organism>
    <name type="scientific">Bacillus subtilis (strain 168)</name>
    <dbReference type="NCBI Taxonomy" id="224308"/>
    <lineage>
        <taxon>Bacteria</taxon>
        <taxon>Bacillati</taxon>
        <taxon>Bacillota</taxon>
        <taxon>Bacilli</taxon>
        <taxon>Bacillales</taxon>
        <taxon>Bacillaceae</taxon>
        <taxon>Bacillus</taxon>
    </lineage>
</organism>
<feature type="chain" id="PRO_0000052206" description="Bifunctional cytochrome P450/NADPH--P450 reductase 1">
    <location>
        <begin position="1"/>
        <end position="1061"/>
    </location>
</feature>
<feature type="domain" description="Flavodoxin-like" evidence="3">
    <location>
        <begin position="493"/>
        <end position="632"/>
    </location>
</feature>
<feature type="domain" description="FAD-binding FR-type" evidence="4">
    <location>
        <begin position="671"/>
        <end position="904"/>
    </location>
</feature>
<feature type="region of interest" description="Cytochrome P450" evidence="12">
    <location>
        <begin position="1"/>
        <end position="475"/>
    </location>
</feature>
<feature type="region of interest" description="NADPH--P450 reductase" evidence="12">
    <location>
        <begin position="476"/>
        <end position="1061"/>
    </location>
</feature>
<feature type="binding site" description="axial binding residue" evidence="2">
    <location>
        <position position="403"/>
    </location>
    <ligand>
        <name>heme</name>
        <dbReference type="ChEBI" id="CHEBI:30413"/>
    </ligand>
    <ligandPart>
        <name>Fe</name>
        <dbReference type="ChEBI" id="CHEBI:18248"/>
    </ligandPart>
</feature>
<feature type="binding site" evidence="2">
    <location>
        <begin position="499"/>
        <end position="504"/>
    </location>
    <ligand>
        <name>FMN</name>
        <dbReference type="ChEBI" id="CHEBI:58210"/>
    </ligand>
</feature>
<feature type="binding site" evidence="2">
    <location>
        <begin position="546"/>
        <end position="549"/>
    </location>
    <ligand>
        <name>FMN</name>
        <dbReference type="ChEBI" id="CHEBI:58210"/>
    </ligand>
</feature>
<feature type="binding site" evidence="2">
    <location>
        <begin position="580"/>
        <end position="582"/>
    </location>
    <ligand>
        <name>FMN</name>
        <dbReference type="ChEBI" id="CHEBI:58210"/>
    </ligand>
</feature>
<feature type="binding site" evidence="2">
    <location>
        <begin position="588"/>
        <end position="590"/>
    </location>
    <ligand>
        <name>FMN</name>
        <dbReference type="ChEBI" id="CHEBI:58210"/>
    </ligand>
</feature>
<feature type="site" description="Important for catalytic activity" evidence="2">
    <location>
        <position position="271"/>
    </location>
</feature>
<feature type="mutagenesis site" description="Exhibits modified substrate specificity. Shows approximately 6- to 9-fold increased activity with SDS, lauric acid and 1,4-naphthoquinone, and enhanced activity for other substrates such as ethacrynic acid and epsilon-amino-n-caproic acid." evidence="7">
    <original>P</original>
    <variation>S</variation>
    <location>
        <position position="15"/>
    </location>
</feature>
<comment type="function">
    <text evidence="5 6 8">Functions as a fatty acid monooxygenase. Catalyzes hydroxylation of a range of long-chain fatty acids, with a preference for long-chain unsaturated and branched-chain fatty acids over saturated fatty acids. Hydroxylation of myristic acid occurs mainly at the omega-2 position. Also displays a NADPH-dependent reductase activity in the C-terminal domain, which allows electron transfer from NADPH to the heme iron of the cytochrome P450 N-terminal domain (PubMed:15122913, PubMed:15375636). Is also able to catalyze efficient oxidation of sodium dodecyl sulfate (SDS) (PubMed:21048857).</text>
</comment>
<comment type="catalytic activity">
    <reaction evidence="5 6">
        <text>an organic molecule + reduced [NADPH--hemoprotein reductase] + O2 = an alcohol + oxidized [NADPH--hemoprotein reductase] + H2O + H(+)</text>
        <dbReference type="Rhea" id="RHEA:17149"/>
        <dbReference type="Rhea" id="RHEA-COMP:11964"/>
        <dbReference type="Rhea" id="RHEA-COMP:11965"/>
        <dbReference type="ChEBI" id="CHEBI:15377"/>
        <dbReference type="ChEBI" id="CHEBI:15378"/>
        <dbReference type="ChEBI" id="CHEBI:15379"/>
        <dbReference type="ChEBI" id="CHEBI:30879"/>
        <dbReference type="ChEBI" id="CHEBI:57618"/>
        <dbReference type="ChEBI" id="CHEBI:58210"/>
        <dbReference type="ChEBI" id="CHEBI:142491"/>
        <dbReference type="EC" id="1.14.14.1"/>
    </reaction>
</comment>
<comment type="catalytic activity">
    <reaction evidence="5 6">
        <text>2 oxidized [cytochrome P450] + NADPH = 2 reduced [cytochrome P450] + NADP(+) + H(+)</text>
        <dbReference type="Rhea" id="RHEA:24040"/>
        <dbReference type="Rhea" id="RHEA-COMP:14627"/>
        <dbReference type="Rhea" id="RHEA-COMP:14628"/>
        <dbReference type="ChEBI" id="CHEBI:15378"/>
        <dbReference type="ChEBI" id="CHEBI:55376"/>
        <dbReference type="ChEBI" id="CHEBI:57783"/>
        <dbReference type="ChEBI" id="CHEBI:58349"/>
        <dbReference type="ChEBI" id="CHEBI:60344"/>
        <dbReference type="EC" id="1.6.2.4"/>
    </reaction>
</comment>
<comment type="cofactor">
    <cofactor evidence="5">
        <name>FAD</name>
        <dbReference type="ChEBI" id="CHEBI:57692"/>
    </cofactor>
</comment>
<comment type="cofactor">
    <cofactor evidence="5">
        <name>FMN</name>
        <dbReference type="ChEBI" id="CHEBI:58210"/>
    </cofactor>
</comment>
<comment type="cofactor">
    <cofactor evidence="5">
        <name>heme b</name>
        <dbReference type="ChEBI" id="CHEBI:60344"/>
    </cofactor>
</comment>
<comment type="biophysicochemical properties">
    <kinetics>
        <KM evidence="5">38.8 uM for stearic acid</KM>
        <KM evidence="5">150 uM for phytanic acid</KM>
        <KM evidence="5">56.8 uM for 15-methylpalmitic acid</KM>
        <KM evidence="5">3.6 uM for NADPH</KM>
        <KM evidence="5">17.9 mM for NADH</KM>
        <KM evidence="5">6.9 uM for cytochrome c (in the reductase assay)</KM>
        <KM evidence="5">153.4 uM for ferricyanide (in the reductase assay)</KM>
        <KM evidence="6">17.36 uM for oleic acid</KM>
        <text evidence="5 6">kcat is 430 min(-1) for stearic acid hydroxylation. kcat is 5430 min(-1) for phytanic acid hydroxylation. kcat is 6105 min(-1) for 15-methylpalmitic acid hydroxylation. kcat is 11400 min(-1) for the reduction of cytochrome c. kcat is 38150 min(-1) for the reduction of ferricyanide (PubMed:15122913). kcat is 2244 min(-1) for oleic acid hydroxylation (PubMed:15375636).</text>
    </kinetics>
    <phDependence>
        <text evidence="6">Optimum pH is 7.0.</text>
    </phDependence>
    <temperatureDependence>
        <text evidence="6">Optimum temperature is 51 degrees Celsius. However, enzyme stability is dramatically reduced at this temperature, incubation for 30 minutes at 31 and 49 degrees Celsius results in 61% and 17% residual activity, respectively. Incubation at 60 degrees Celsius leads to total inactivation of the enzyme.</text>
    </temperatureDependence>
</comment>
<comment type="subcellular location">
    <subcellularLocation>
        <location evidence="1">Cytoplasm</location>
    </subcellularLocation>
</comment>
<comment type="similarity">
    <text evidence="11">In the N-terminal section; belongs to the cytochrome P450 family.</text>
</comment>
<gene>
    <name evidence="13" type="primary">cypD</name>
    <name evidence="9 10" type="synonym">cyp102A2</name>
    <name evidence="9" type="synonym">yetO</name>
    <name type="synonym">yfnJ</name>
    <name type="ordered locus">BSU07250</name>
</gene>
<protein>
    <recommendedName>
        <fullName evidence="11">Bifunctional cytochrome P450/NADPH--P450 reductase 1</fullName>
    </recommendedName>
    <alternativeName>
        <fullName evidence="9">CYP102A2</fullName>
    </alternativeName>
    <alternativeName>
        <fullName evidence="11">Fatty acid hydroxylase CypD</fullName>
    </alternativeName>
    <alternativeName>
        <fullName evidence="11">Flavocytochrome P450 102A2</fullName>
    </alternativeName>
    <domain>
        <recommendedName>
            <fullName evidence="11">Cytochrome P450 102A2</fullName>
            <ecNumber evidence="5 6">1.14.14.1</ecNumber>
        </recommendedName>
    </domain>
    <domain>
        <recommendedName>
            <fullName evidence="11">NADPH--cytochrome P450 reductase</fullName>
            <ecNumber evidence="5 6">1.6.2.4</ecNumber>
        </recommendedName>
    </domain>
</protein>
<evidence type="ECO:0000250" key="1"/>
<evidence type="ECO:0000250" key="2">
    <source>
        <dbReference type="UniProtKB" id="P14779"/>
    </source>
</evidence>
<evidence type="ECO:0000255" key="3">
    <source>
        <dbReference type="PROSITE-ProRule" id="PRU00088"/>
    </source>
</evidence>
<evidence type="ECO:0000255" key="4">
    <source>
        <dbReference type="PROSITE-ProRule" id="PRU00716"/>
    </source>
</evidence>
<evidence type="ECO:0000269" key="5">
    <source>
    </source>
</evidence>
<evidence type="ECO:0000269" key="6">
    <source>
    </source>
</evidence>
<evidence type="ECO:0000269" key="7">
    <source>
    </source>
</evidence>
<evidence type="ECO:0000269" key="8">
    <source>
    </source>
</evidence>
<evidence type="ECO:0000303" key="9">
    <source>
    </source>
</evidence>
<evidence type="ECO:0000303" key="10">
    <source>
    </source>
</evidence>
<evidence type="ECO:0000305" key="11"/>
<evidence type="ECO:0000305" key="12">
    <source>
    </source>
</evidence>
<evidence type="ECO:0000312" key="13">
    <source>
        <dbReference type="EMBL" id="CAB12544.1"/>
    </source>
</evidence>
<sequence length="1061" mass="119468">MKETSPIPQPKTFGPLGNLPLIDKDKPTLSLIKLAEEQGPIFQIHTPAGTTIVVSGHELVKEVCDEERFDKSIEGALEKVRAFSGDGLFTSWTHEPNWRKAHNILMPTFSQRAMKDYHEKMVDIAVQLIQKWARLNPNEAVDVPGDMTRLTLDTIGLCGFNYRFNSYYRETPHPFINSMVRALDEAMHQMQRLDVQDKLMVRTKRQFRYDIQTMFSLVDSIIAERRANGDQDEKDLLARMLNVEDPETGEKLDDENIRFQIITFLIAGHETTSGLLSFATYFLLKHPDKLKKAYEEVDRVLTDAAPTYKQVLELTYIRMILNESLRLWPTAPAFSLYPKEDTVIGGKFPITTNDRISVLIPQLHRDRDAWGKDAEEFRPERFEHQDQVPHHAYKPFGNGQRACIGMQFALHEATLVLGMILKYFTLIDHENYELDIKQTLTLKPGDFHISVQSRHQEAIHADVQAAEKAAPDEQKEKTEAKGASVIGLNNRPLLVLYGSDTGTAEGVARELADTASLHGVRTKTAPLNDRIGKLPKEGAVVIVTSSYNGKPPSNAGQFVQWLQEIKPGELEGVHYAVFGCGDHNWASTYQYVPRFIDEQLAEKGATRFSARGEGDVSGDFEGQLDEWKKSMWADAIKAFGLELNENADKERSTLSLQFVRGLGESPLARSYEASHASIAENRELQSADSDRSTRHIEIALPPDVEYQEGDHLGVLPKNSQTNVSRILHRFGLKGTDQVTLSASGRSAGHLPLGRPVSLHDLLSYSVEVQEAATRAQIRELASFTVCPPHRRELEELSAEGVYQEQILKKRISMLDLLEKYEACDMPFERFLELLRPLKPRYYSISSSPRVNPRQASITVGVVRGPAWSGRGEYRGVASNDLAERQAGDDVVMFIRTPESRFQLPKDPETPIIMVGPGTGVAPFRGFLQARDVLKREGKTLGEAHLYFGCRNDRDFIYRDELERFEKDGIVTVHTAFSRKEGMPKTYVQHLMADQADTLISILDRGGRLYVCGDGSKMAPDVEAALQKAYQAVHGTGEQEAQNWLRHLQDTGMYAKDVWAGI</sequence>
<proteinExistence type="evidence at protein level"/>
<keyword id="KW-0963">Cytoplasm</keyword>
<keyword id="KW-0249">Electron transport</keyword>
<keyword id="KW-0274">FAD</keyword>
<keyword id="KW-0285">Flavoprotein</keyword>
<keyword id="KW-0288">FMN</keyword>
<keyword id="KW-0349">Heme</keyword>
<keyword id="KW-0408">Iron</keyword>
<keyword id="KW-0479">Metal-binding</keyword>
<keyword id="KW-0503">Monooxygenase</keyword>
<keyword id="KW-0511">Multifunctional enzyme</keyword>
<keyword id="KW-0521">NADP</keyword>
<keyword id="KW-0560">Oxidoreductase</keyword>
<keyword id="KW-1185">Reference proteome</keyword>
<keyword id="KW-0813">Transport</keyword>
<reference key="1">
    <citation type="journal article" date="1997" name="Microbiology">
        <title>Sequence of the Bacillus subtilis genome region in the vicinity of the lev operon reveals two new extracytoplasmic function RNA polymerase sigma factors SigV and SigZ.</title>
        <authorList>
            <person name="Sorokin A."/>
            <person name="Bolotin A."/>
            <person name="Purnelle B."/>
            <person name="Hilbert H."/>
            <person name="Lauber J."/>
            <person name="Duesterhoeft A."/>
            <person name="Ehrlich S.D."/>
        </authorList>
    </citation>
    <scope>NUCLEOTIDE SEQUENCE [GENOMIC DNA]</scope>
    <source>
        <strain>168</strain>
    </source>
</reference>
<reference key="2">
    <citation type="journal article" date="1997" name="Nature">
        <title>The complete genome sequence of the Gram-positive bacterium Bacillus subtilis.</title>
        <authorList>
            <person name="Kunst F."/>
            <person name="Ogasawara N."/>
            <person name="Moszer I."/>
            <person name="Albertini A.M."/>
            <person name="Alloni G."/>
            <person name="Azevedo V."/>
            <person name="Bertero M.G."/>
            <person name="Bessieres P."/>
            <person name="Bolotin A."/>
            <person name="Borchert S."/>
            <person name="Borriss R."/>
            <person name="Boursier L."/>
            <person name="Brans A."/>
            <person name="Braun M."/>
            <person name="Brignell S.C."/>
            <person name="Bron S."/>
            <person name="Brouillet S."/>
            <person name="Bruschi C.V."/>
            <person name="Caldwell B."/>
            <person name="Capuano V."/>
            <person name="Carter N.M."/>
            <person name="Choi S.-K."/>
            <person name="Codani J.-J."/>
            <person name="Connerton I.F."/>
            <person name="Cummings N.J."/>
            <person name="Daniel R.A."/>
            <person name="Denizot F."/>
            <person name="Devine K.M."/>
            <person name="Duesterhoeft A."/>
            <person name="Ehrlich S.D."/>
            <person name="Emmerson P.T."/>
            <person name="Entian K.-D."/>
            <person name="Errington J."/>
            <person name="Fabret C."/>
            <person name="Ferrari E."/>
            <person name="Foulger D."/>
            <person name="Fritz C."/>
            <person name="Fujita M."/>
            <person name="Fujita Y."/>
            <person name="Fuma S."/>
            <person name="Galizzi A."/>
            <person name="Galleron N."/>
            <person name="Ghim S.-Y."/>
            <person name="Glaser P."/>
            <person name="Goffeau A."/>
            <person name="Golightly E.J."/>
            <person name="Grandi G."/>
            <person name="Guiseppi G."/>
            <person name="Guy B.J."/>
            <person name="Haga K."/>
            <person name="Haiech J."/>
            <person name="Harwood C.R."/>
            <person name="Henaut A."/>
            <person name="Hilbert H."/>
            <person name="Holsappel S."/>
            <person name="Hosono S."/>
            <person name="Hullo M.-F."/>
            <person name="Itaya M."/>
            <person name="Jones L.-M."/>
            <person name="Joris B."/>
            <person name="Karamata D."/>
            <person name="Kasahara Y."/>
            <person name="Klaerr-Blanchard M."/>
            <person name="Klein C."/>
            <person name="Kobayashi Y."/>
            <person name="Koetter P."/>
            <person name="Koningstein G."/>
            <person name="Krogh S."/>
            <person name="Kumano M."/>
            <person name="Kurita K."/>
            <person name="Lapidus A."/>
            <person name="Lardinois S."/>
            <person name="Lauber J."/>
            <person name="Lazarevic V."/>
            <person name="Lee S.-M."/>
            <person name="Levine A."/>
            <person name="Liu H."/>
            <person name="Masuda S."/>
            <person name="Mauel C."/>
            <person name="Medigue C."/>
            <person name="Medina N."/>
            <person name="Mellado R.P."/>
            <person name="Mizuno M."/>
            <person name="Moestl D."/>
            <person name="Nakai S."/>
            <person name="Noback M."/>
            <person name="Noone D."/>
            <person name="O'Reilly M."/>
            <person name="Ogawa K."/>
            <person name="Ogiwara A."/>
            <person name="Oudega B."/>
            <person name="Park S.-H."/>
            <person name="Parro V."/>
            <person name="Pohl T.M."/>
            <person name="Portetelle D."/>
            <person name="Porwollik S."/>
            <person name="Prescott A.M."/>
            <person name="Presecan E."/>
            <person name="Pujic P."/>
            <person name="Purnelle B."/>
            <person name="Rapoport G."/>
            <person name="Rey M."/>
            <person name="Reynolds S."/>
            <person name="Rieger M."/>
            <person name="Rivolta C."/>
            <person name="Rocha E."/>
            <person name="Roche B."/>
            <person name="Rose M."/>
            <person name="Sadaie Y."/>
            <person name="Sato T."/>
            <person name="Scanlan E."/>
            <person name="Schleich S."/>
            <person name="Schroeter R."/>
            <person name="Scoffone F."/>
            <person name="Sekiguchi J."/>
            <person name="Sekowska A."/>
            <person name="Seror S.J."/>
            <person name="Serror P."/>
            <person name="Shin B.-S."/>
            <person name="Soldo B."/>
            <person name="Sorokin A."/>
            <person name="Tacconi E."/>
            <person name="Takagi T."/>
            <person name="Takahashi H."/>
            <person name="Takemaru K."/>
            <person name="Takeuchi M."/>
            <person name="Tamakoshi A."/>
            <person name="Tanaka T."/>
            <person name="Terpstra P."/>
            <person name="Tognoni A."/>
            <person name="Tosato V."/>
            <person name="Uchiyama S."/>
            <person name="Vandenbol M."/>
            <person name="Vannier F."/>
            <person name="Vassarotti A."/>
            <person name="Viari A."/>
            <person name="Wambutt R."/>
            <person name="Wedler E."/>
            <person name="Wedler H."/>
            <person name="Weitzenegger T."/>
            <person name="Winters P."/>
            <person name="Wipat A."/>
            <person name="Yamamoto H."/>
            <person name="Yamane K."/>
            <person name="Yasumoto K."/>
            <person name="Yata K."/>
            <person name="Yoshida K."/>
            <person name="Yoshikawa H.-F."/>
            <person name="Zumstein E."/>
            <person name="Yoshikawa H."/>
            <person name="Danchin A."/>
        </authorList>
    </citation>
    <scope>NUCLEOTIDE SEQUENCE [LARGE SCALE GENOMIC DNA]</scope>
    <source>
        <strain>168</strain>
    </source>
</reference>
<reference key="3">
    <citation type="journal article" date="2004" name="Appl. Microbiol. Biotechnol.">
        <title>Cloning, expression and characterisation of CYP102A2, a self-sufficient P450 monooxygenase from Bacillus subtilis.</title>
        <authorList>
            <person name="Budde M."/>
            <person name="Maurer S.C."/>
            <person name="Schmid R.D."/>
            <person name="Urlacher V.B."/>
        </authorList>
    </citation>
    <scope>FUNCTION</scope>
    <scope>CATALYTIC ACTIVITY</scope>
    <scope>SUBSTRATE SPECIFICITY</scope>
    <scope>BIOPHYSICOCHEMICAL PROPERTIES</scope>
</reference>
<reference key="4">
    <citation type="journal article" date="2004" name="Biochemistry">
        <title>Expression, purification, and characterization of Bacillus subtilis cytochromes P450 CYP102A2 and CYP102A3: flavocytochrome homologues of P450 BM3 from Bacillus megaterium.</title>
        <authorList>
            <person name="Gustafsson M.C."/>
            <person name="Roitel O."/>
            <person name="Marshall K.R."/>
            <person name="Noble M.A."/>
            <person name="Chapman S.K."/>
            <person name="Pessegueiro A."/>
            <person name="Fulco A.J."/>
            <person name="Cheesman M.R."/>
            <person name="von Wachenfeldt C."/>
            <person name="Munro A.W."/>
        </authorList>
    </citation>
    <scope>FUNCTION</scope>
    <scope>CATALYTIC ACTIVITY</scope>
    <scope>COFACTOR</scope>
    <scope>SUBSTRATE SPECIFICITY</scope>
    <scope>BIOPHYSICOCHEMICAL PROPERTIES</scope>
    <source>
        <strain>168 / 1A1</strain>
    </source>
</reference>
<reference key="5">
    <citation type="journal article" date="2005" name="Biomol. Eng.">
        <title>Engineering the substrate specificity of cytochrome P450 CYP102A2 by directed evolution: production of an efficient enzyme for bioconversion of fine chemicals.</title>
        <authorList>
            <person name="Axarli I."/>
            <person name="Prigipaki A."/>
            <person name="Labrou N.E."/>
        </authorList>
    </citation>
    <scope>PROTEIN ENGINEERING</scope>
    <scope>MUTAGENESIS OF PRO-15</scope>
    <source>
        <strain>168</strain>
    </source>
</reference>
<reference key="6">
    <citation type="journal article" date="2010" name="Enzyme Res.">
        <title>Cytochrome P450 102A2 catalyzes efficient oxidation of sodium dodecyl sulphate: a molecular tool for remediation.</title>
        <authorList>
            <person name="Axarli I."/>
            <person name="Prigipaki A."/>
            <person name="Labrou N.E."/>
        </authorList>
    </citation>
    <scope>FUNCTION</scope>
</reference>